<comment type="function">
    <text evidence="1">Single strand-specific metallo-endoribonuclease involved in late-stage 70S ribosome quality control and in maturation of the 3' terminus of the 16S rRNA.</text>
</comment>
<comment type="cofactor">
    <cofactor evidence="1">
        <name>Zn(2+)</name>
        <dbReference type="ChEBI" id="CHEBI:29105"/>
    </cofactor>
    <text evidence="1">Binds 1 zinc ion.</text>
</comment>
<comment type="subcellular location">
    <subcellularLocation>
        <location evidence="1">Cytoplasm</location>
    </subcellularLocation>
</comment>
<comment type="similarity">
    <text evidence="1">Belongs to the endoribonuclease YbeY family.</text>
</comment>
<comment type="sequence caution" evidence="2">
    <conflict type="erroneous initiation">
        <sequence resource="EMBL-CDS" id="ABI88304"/>
    </conflict>
</comment>
<protein>
    <recommendedName>
        <fullName evidence="1">Endoribonuclease YbeY</fullName>
        <ecNumber evidence="1">3.1.-.-</ecNumber>
    </recommendedName>
</protein>
<reference key="1">
    <citation type="submission" date="2006-08" db="EMBL/GenBank/DDBJ databases">
        <title>Complete sequence of chromosome 1 of Burkholderia cepacia AMMD.</title>
        <authorList>
            <person name="Copeland A."/>
            <person name="Lucas S."/>
            <person name="Lapidus A."/>
            <person name="Barry K."/>
            <person name="Detter J.C."/>
            <person name="Glavina del Rio T."/>
            <person name="Hammon N."/>
            <person name="Israni S."/>
            <person name="Pitluck S."/>
            <person name="Bruce D."/>
            <person name="Chain P."/>
            <person name="Malfatti S."/>
            <person name="Shin M."/>
            <person name="Vergez L."/>
            <person name="Schmutz J."/>
            <person name="Larimer F."/>
            <person name="Land M."/>
            <person name="Hauser L."/>
            <person name="Kyrpides N."/>
            <person name="Kim E."/>
            <person name="Parke J."/>
            <person name="Coenye T."/>
            <person name="Konstantinidis K."/>
            <person name="Ramette A."/>
            <person name="Tiedje J."/>
            <person name="Richardson P."/>
        </authorList>
    </citation>
    <scope>NUCLEOTIDE SEQUENCE [LARGE SCALE GENOMIC DNA]</scope>
    <source>
        <strain>ATCC BAA-244 / DSM 16087 / CCUG 44356 / LMG 19182 / AMMD</strain>
    </source>
</reference>
<keyword id="KW-0963">Cytoplasm</keyword>
<keyword id="KW-0255">Endonuclease</keyword>
<keyword id="KW-0378">Hydrolase</keyword>
<keyword id="KW-0479">Metal-binding</keyword>
<keyword id="KW-0540">Nuclease</keyword>
<keyword id="KW-0690">Ribosome biogenesis</keyword>
<keyword id="KW-0698">rRNA processing</keyword>
<keyword id="KW-0862">Zinc</keyword>
<accession>Q0BC19</accession>
<evidence type="ECO:0000255" key="1">
    <source>
        <dbReference type="HAMAP-Rule" id="MF_00009"/>
    </source>
</evidence>
<evidence type="ECO:0000305" key="2"/>
<sequence length="175" mass="19403">MTLHVGAEPAPREEEIAEMADEPRELEFDLSVQYGDEVTGDVRKACPKRKLIAEWIEPALFSSAQLTVRFVGEEEGRTLNDGYRHKDYPTNVLTFAYDPLPDGTVIGDLVLCCPVVEKEAQEQGKPLAAHYAHLLVHGALHAQGYDHETSEEDAAEMEALEVAILAKLGFPNPYQ</sequence>
<proteinExistence type="inferred from homology"/>
<name>YBEY_BURCM</name>
<feature type="chain" id="PRO_0000284174" description="Endoribonuclease YbeY">
    <location>
        <begin position="1"/>
        <end position="175"/>
    </location>
</feature>
<feature type="binding site" evidence="1">
    <location>
        <position position="137"/>
    </location>
    <ligand>
        <name>Zn(2+)</name>
        <dbReference type="ChEBI" id="CHEBI:29105"/>
        <note>catalytic</note>
    </ligand>
</feature>
<feature type="binding site" evidence="1">
    <location>
        <position position="141"/>
    </location>
    <ligand>
        <name>Zn(2+)</name>
        <dbReference type="ChEBI" id="CHEBI:29105"/>
        <note>catalytic</note>
    </ligand>
</feature>
<feature type="binding site" evidence="1">
    <location>
        <position position="147"/>
    </location>
    <ligand>
        <name>Zn(2+)</name>
        <dbReference type="ChEBI" id="CHEBI:29105"/>
        <note>catalytic</note>
    </ligand>
</feature>
<dbReference type="EC" id="3.1.-.-" evidence="1"/>
<dbReference type="EMBL" id="CP000440">
    <property type="protein sequence ID" value="ABI88304.1"/>
    <property type="status" value="ALT_INIT"/>
    <property type="molecule type" value="Genomic_DNA"/>
</dbReference>
<dbReference type="RefSeq" id="WP_011657873.1">
    <property type="nucleotide sequence ID" value="NZ_CP009798.1"/>
</dbReference>
<dbReference type="SMR" id="Q0BC19"/>
<dbReference type="GeneID" id="93085052"/>
<dbReference type="KEGG" id="bam:Bamb_2748"/>
<dbReference type="eggNOG" id="COG0319">
    <property type="taxonomic scope" value="Bacteria"/>
</dbReference>
<dbReference type="Proteomes" id="UP000000662">
    <property type="component" value="Chromosome 1"/>
</dbReference>
<dbReference type="GO" id="GO:0005737">
    <property type="term" value="C:cytoplasm"/>
    <property type="evidence" value="ECO:0007669"/>
    <property type="project" value="UniProtKB-SubCell"/>
</dbReference>
<dbReference type="GO" id="GO:0004222">
    <property type="term" value="F:metalloendopeptidase activity"/>
    <property type="evidence" value="ECO:0007669"/>
    <property type="project" value="InterPro"/>
</dbReference>
<dbReference type="GO" id="GO:0004521">
    <property type="term" value="F:RNA endonuclease activity"/>
    <property type="evidence" value="ECO:0007669"/>
    <property type="project" value="UniProtKB-UniRule"/>
</dbReference>
<dbReference type="GO" id="GO:0008270">
    <property type="term" value="F:zinc ion binding"/>
    <property type="evidence" value="ECO:0007669"/>
    <property type="project" value="UniProtKB-UniRule"/>
</dbReference>
<dbReference type="GO" id="GO:0006364">
    <property type="term" value="P:rRNA processing"/>
    <property type="evidence" value="ECO:0007669"/>
    <property type="project" value="UniProtKB-UniRule"/>
</dbReference>
<dbReference type="Gene3D" id="3.40.390.30">
    <property type="entry name" value="Metalloproteases ('zincins'), catalytic domain"/>
    <property type="match status" value="1"/>
</dbReference>
<dbReference type="HAMAP" id="MF_00009">
    <property type="entry name" value="Endoribonucl_YbeY"/>
    <property type="match status" value="1"/>
</dbReference>
<dbReference type="InterPro" id="IPR023091">
    <property type="entry name" value="MetalPrtase_cat_dom_sf_prd"/>
</dbReference>
<dbReference type="InterPro" id="IPR002036">
    <property type="entry name" value="YbeY"/>
</dbReference>
<dbReference type="InterPro" id="IPR020549">
    <property type="entry name" value="YbeY_CS"/>
</dbReference>
<dbReference type="NCBIfam" id="NF010570">
    <property type="entry name" value="PRK13963.1"/>
    <property type="match status" value="1"/>
</dbReference>
<dbReference type="NCBIfam" id="TIGR00043">
    <property type="entry name" value="rRNA maturation RNase YbeY"/>
    <property type="match status" value="1"/>
</dbReference>
<dbReference type="PANTHER" id="PTHR46986">
    <property type="entry name" value="ENDORIBONUCLEASE YBEY, CHLOROPLASTIC"/>
    <property type="match status" value="1"/>
</dbReference>
<dbReference type="PANTHER" id="PTHR46986:SF1">
    <property type="entry name" value="ENDORIBONUCLEASE YBEY, CHLOROPLASTIC"/>
    <property type="match status" value="1"/>
</dbReference>
<dbReference type="Pfam" id="PF02130">
    <property type="entry name" value="YbeY"/>
    <property type="match status" value="1"/>
</dbReference>
<dbReference type="SUPFAM" id="SSF55486">
    <property type="entry name" value="Metalloproteases ('zincins'), catalytic domain"/>
    <property type="match status" value="1"/>
</dbReference>
<dbReference type="PROSITE" id="PS01306">
    <property type="entry name" value="UPF0054"/>
    <property type="match status" value="1"/>
</dbReference>
<gene>
    <name evidence="1" type="primary">ybeY</name>
    <name type="ordered locus">Bamb_2748</name>
</gene>
<organism>
    <name type="scientific">Burkholderia ambifaria (strain ATCC BAA-244 / DSM 16087 / CCUG 44356 / LMG 19182 / AMMD)</name>
    <name type="common">Burkholderia cepacia (strain AMMD)</name>
    <dbReference type="NCBI Taxonomy" id="339670"/>
    <lineage>
        <taxon>Bacteria</taxon>
        <taxon>Pseudomonadati</taxon>
        <taxon>Pseudomonadota</taxon>
        <taxon>Betaproteobacteria</taxon>
        <taxon>Burkholderiales</taxon>
        <taxon>Burkholderiaceae</taxon>
        <taxon>Burkholderia</taxon>
        <taxon>Burkholderia cepacia complex</taxon>
    </lineage>
</organism>